<reference key="1">
    <citation type="journal article" date="2002" name="Eur. J. Biochem.">
        <title>Purification and properties of an alkaline proteinase of Fusarium culmorum.</title>
        <authorList>
            <person name="Pekkarinen A.I."/>
            <person name="Jones B.L."/>
            <person name="Niku-Paavola M.-L."/>
        </authorList>
    </citation>
    <scope>PROTEIN SEQUENCE</scope>
    <scope>FUNCTION</scope>
    <scope>ACTIVITY REGULATION</scope>
    <scope>INDUCTION</scope>
    <scope>MASS SPECTROMETRY</scope>
    <source>
        <strain>MUCL 28166 / VTT-D-80148</strain>
    </source>
</reference>
<dbReference type="EC" id="3.4.21.-"/>
<dbReference type="SMR" id="P83610"/>
<dbReference type="GO" id="GO:0005576">
    <property type="term" value="C:extracellular region"/>
    <property type="evidence" value="ECO:0007669"/>
    <property type="project" value="UniProtKB-SubCell"/>
</dbReference>
<dbReference type="GO" id="GO:0008236">
    <property type="term" value="F:serine-type peptidase activity"/>
    <property type="evidence" value="ECO:0007669"/>
    <property type="project" value="UniProtKB-KW"/>
</dbReference>
<dbReference type="GO" id="GO:0006508">
    <property type="term" value="P:proteolysis"/>
    <property type="evidence" value="ECO:0007669"/>
    <property type="project" value="UniProtKB-KW"/>
</dbReference>
<dbReference type="InterPro" id="IPR023827">
    <property type="entry name" value="Peptidase_S8_Asp-AS"/>
</dbReference>
<dbReference type="PROSITE" id="PS51892">
    <property type="entry name" value="SUBTILASE"/>
    <property type="match status" value="1"/>
</dbReference>
<dbReference type="PROSITE" id="PS00136">
    <property type="entry name" value="SUBTILASE_ASP"/>
    <property type="match status" value="1"/>
</dbReference>
<proteinExistence type="evidence at protein level"/>
<accession>P83610</accession>
<keyword id="KW-0903">Direct protein sequencing</keyword>
<keyword id="KW-0378">Hydrolase</keyword>
<keyword id="KW-0645">Protease</keyword>
<keyword id="KW-0964">Secreted</keyword>
<keyword id="KW-0720">Serine protease</keyword>
<comment type="function">
    <text evidence="4">Serine protease. May be involved in the invasion of grains and hydrolysis of grain proteins.</text>
</comment>
<comment type="activity regulation">
    <text evidence="4">Inhibited by phenylmethanesulfonyl fluoride (PMSF) and chymostatin (CST), but not by Bowman-Birk type trypsin-chymotrypsin inhibitor (BBI).</text>
</comment>
<comment type="biophysicochemical properties">
    <kinetics>
        <KM>3.1 mM for N-succinyl-Ala-Ala-Pro-Phe p-nitroanilide (at pH 6.0 with dimethylsulfoxide)</KM>
        <KM>2.3 mM for N-succinyl-Ala-Ala-Pro-Phe p-nitroanilide (at pH 9.0 with dimethylsulfoxide)</KM>
        <KM>1.1 mM for N-succinyl-Ala-Ala-Pro-Phe p-nitroanilide (at pH 9.0 without dimethylsulfoxide)</KM>
    </kinetics>
    <phDependence>
        <text>Optimum pH is 8.3-9.6.</text>
    </phDependence>
    <temperatureDependence>
        <text>Optimum temperature is 40 degrees Celsius.</text>
    </temperatureDependence>
</comment>
<comment type="subcellular location">
    <subcellularLocation>
        <location evidence="1">Secreted</location>
    </subcellularLocation>
</comment>
<comment type="induction">
    <text evidence="4">By gluten.</text>
</comment>
<comment type="mass spectrometry"/>
<comment type="similarity">
    <text evidence="5">Belongs to the peptidase S8 family.</text>
</comment>
<protein>
    <recommendedName>
        <fullName>Alkaline proteinase</fullName>
        <shortName>ALP</shortName>
        <ecNumber>3.4.21.-</ecNumber>
    </recommendedName>
</protein>
<feature type="chain" id="PRO_0000076406" description="Alkaline proteinase">
    <location>
        <begin position="1" status="less than"/>
        <end position="62" status="greater than"/>
    </location>
</feature>
<feature type="domain" description="Peptidase S8" evidence="2">
    <location>
        <begin position="1" status="less than"/>
        <end position="62" status="greater than"/>
    </location>
</feature>
<feature type="active site" description="Charge relay system" evidence="3">
    <location>
        <position position="21"/>
    </location>
</feature>
<feature type="non-consecutive residues" evidence="5">
    <location>
        <begin position="29"/>
        <end position="30"/>
    </location>
</feature>
<feature type="non-consecutive residues" evidence="5">
    <location>
        <begin position="41"/>
        <end position="42"/>
    </location>
</feature>
<feature type="non-terminal residue">
    <location>
        <position position="1"/>
    </location>
</feature>
<feature type="non-terminal residue">
    <location>
        <position position="62"/>
    </location>
</feature>
<organism>
    <name type="scientific">Fusarium culmorum</name>
    <dbReference type="NCBI Taxonomy" id="5516"/>
    <lineage>
        <taxon>Eukaryota</taxon>
        <taxon>Fungi</taxon>
        <taxon>Dikarya</taxon>
        <taxon>Ascomycota</taxon>
        <taxon>Pezizomycotina</taxon>
        <taxon>Sordariomycetes</taxon>
        <taxon>Hypocreomycetidae</taxon>
        <taxon>Hypocreales</taxon>
        <taxon>Nectriaceae</taxon>
        <taxon>Fusarium</taxon>
    </lineage>
</organism>
<sequence>GSTSYIYDTSAGSGTYAYIVDTGIITSHNGFNWAANDIISKSYSNYGTVLDIFAPGTSVLSS</sequence>
<name>ALP_FUSCU</name>
<evidence type="ECO:0000250" key="1"/>
<evidence type="ECO:0000255" key="2">
    <source>
        <dbReference type="PROSITE-ProRule" id="PRU01240"/>
    </source>
</evidence>
<evidence type="ECO:0000255" key="3">
    <source>
        <dbReference type="PROSITE-ProRule" id="PRU10080"/>
    </source>
</evidence>
<evidence type="ECO:0000269" key="4">
    <source>
    </source>
</evidence>
<evidence type="ECO:0000305" key="5"/>